<accession>A8FG97</accession>
<comment type="function">
    <text evidence="1">Negative regulator of FtsZ ring formation; modulates the frequency and position of FtsZ ring formation. Inhibits FtsZ ring formation at polar sites. Interacts either with FtsZ or with one of its binding partners to promote depolymerization.</text>
</comment>
<comment type="subcellular location">
    <subcellularLocation>
        <location evidence="1">Cell membrane</location>
        <topology evidence="1">Single-pass membrane protein</topology>
    </subcellularLocation>
    <text evidence="1">Colocalized with FtsZ to the nascent septal site.</text>
</comment>
<comment type="similarity">
    <text evidence="1">Belongs to the EzrA family.</text>
</comment>
<name>EZRA_BACP2</name>
<proteinExistence type="inferred from homology"/>
<sequence length="567" mass="66335">MEFIIGLIVILLALFSVGYFLRKNIYKEIDRLEAWKIEILNRSIVEEISKIKHLKMTGETEQFFERWRAEWDDIVTAHLPKVEELLYDAEEYSDKYRFSKAKQVLTHIEDLLSAADSNIEDILKEIADLVTSEEQNRKDIEKVKEQYQTVRKNLLAYSHLYGTLYDKMEQDLDEAWEGIKQYEEETENGNYMKARKILLEQDRRLDQLQLYINDVPKLIADCKQTVPGQLTKLKDGYQEMSEKGYKLEHIQITKELETLNKQLARAEKLLIDELNLEEASSILQMIDDAIETLYDQLEAEVEAGQEIKSRMPELTEAFEKLEQDHTQTKAETALVKESYKLTAGELDQQKAFEKRLEEIEKLMKQIREKLDRDHVAYSLLMDEINQLETFIEDAKALHDTFKGHLQSLRKEELQARETLAELKTMLTDTVRQLHKSNIPGVPAEMKERAEKAQEMIHQVHEQLENLPLNMPAVNQQLKEASDTVRNVVDETEEMLSKVDQIERIIQYGNRFRSQNHILSEQLKEAERRFYAYDYNGSFDIAAAAVEKASPGAVQKLLAQQEKEYQHQ</sequence>
<evidence type="ECO:0000255" key="1">
    <source>
        <dbReference type="HAMAP-Rule" id="MF_00728"/>
    </source>
</evidence>
<protein>
    <recommendedName>
        <fullName evidence="1">Septation ring formation regulator EzrA</fullName>
    </recommendedName>
</protein>
<gene>
    <name evidence="1" type="primary">ezrA</name>
    <name type="ordered locus">BPUM_2606</name>
</gene>
<organism>
    <name type="scientific">Bacillus pumilus (strain SAFR-032)</name>
    <dbReference type="NCBI Taxonomy" id="315750"/>
    <lineage>
        <taxon>Bacteria</taxon>
        <taxon>Bacillati</taxon>
        <taxon>Bacillota</taxon>
        <taxon>Bacilli</taxon>
        <taxon>Bacillales</taxon>
        <taxon>Bacillaceae</taxon>
        <taxon>Bacillus</taxon>
    </lineage>
</organism>
<feature type="chain" id="PRO_1000062106" description="Septation ring formation regulator EzrA">
    <location>
        <begin position="1"/>
        <end position="567"/>
    </location>
</feature>
<feature type="topological domain" description="Extracellular" evidence="1">
    <location>
        <begin position="1"/>
        <end position="2"/>
    </location>
</feature>
<feature type="transmembrane region" description="Helical" evidence="1">
    <location>
        <begin position="3"/>
        <end position="21"/>
    </location>
</feature>
<feature type="topological domain" description="Cytoplasmic" evidence="1">
    <location>
        <begin position="22"/>
        <end position="567"/>
    </location>
</feature>
<feature type="coiled-coil region" evidence="1">
    <location>
        <begin position="108"/>
        <end position="185"/>
    </location>
</feature>
<feature type="coiled-coil region" evidence="1">
    <location>
        <begin position="243"/>
        <end position="375"/>
    </location>
</feature>
<feature type="coiled-coil region" evidence="1">
    <location>
        <begin position="402"/>
        <end position="529"/>
    </location>
</feature>
<dbReference type="EMBL" id="CP000813">
    <property type="protein sequence ID" value="ABV63264.1"/>
    <property type="molecule type" value="Genomic_DNA"/>
</dbReference>
<dbReference type="RefSeq" id="WP_012010900.1">
    <property type="nucleotide sequence ID" value="NZ_VEIC01000003.1"/>
</dbReference>
<dbReference type="SMR" id="A8FG97"/>
<dbReference type="STRING" id="315750.BPUM_2606"/>
<dbReference type="GeneID" id="5621871"/>
<dbReference type="KEGG" id="bpu:BPUM_2606"/>
<dbReference type="eggNOG" id="COG4477">
    <property type="taxonomic scope" value="Bacteria"/>
</dbReference>
<dbReference type="HOGENOM" id="CLU_034079_1_0_9"/>
<dbReference type="OrthoDB" id="1654473at2"/>
<dbReference type="Proteomes" id="UP000001355">
    <property type="component" value="Chromosome"/>
</dbReference>
<dbReference type="GO" id="GO:0005886">
    <property type="term" value="C:plasma membrane"/>
    <property type="evidence" value="ECO:0007669"/>
    <property type="project" value="UniProtKB-SubCell"/>
</dbReference>
<dbReference type="GO" id="GO:0005940">
    <property type="term" value="C:septin ring"/>
    <property type="evidence" value="ECO:0007669"/>
    <property type="project" value="InterPro"/>
</dbReference>
<dbReference type="GO" id="GO:0000917">
    <property type="term" value="P:division septum assembly"/>
    <property type="evidence" value="ECO:0007669"/>
    <property type="project" value="UniProtKB-KW"/>
</dbReference>
<dbReference type="GO" id="GO:0000921">
    <property type="term" value="P:septin ring assembly"/>
    <property type="evidence" value="ECO:0007669"/>
    <property type="project" value="InterPro"/>
</dbReference>
<dbReference type="HAMAP" id="MF_00728">
    <property type="entry name" value="EzrA"/>
    <property type="match status" value="1"/>
</dbReference>
<dbReference type="InterPro" id="IPR010379">
    <property type="entry name" value="EzrA"/>
</dbReference>
<dbReference type="NCBIfam" id="NF003413">
    <property type="entry name" value="PRK04778.1-7"/>
    <property type="match status" value="1"/>
</dbReference>
<dbReference type="Pfam" id="PF06160">
    <property type="entry name" value="EzrA"/>
    <property type="match status" value="1"/>
</dbReference>
<keyword id="KW-0131">Cell cycle</keyword>
<keyword id="KW-0132">Cell division</keyword>
<keyword id="KW-1003">Cell membrane</keyword>
<keyword id="KW-0175">Coiled coil</keyword>
<keyword id="KW-0472">Membrane</keyword>
<keyword id="KW-0717">Septation</keyword>
<keyword id="KW-0812">Transmembrane</keyword>
<keyword id="KW-1133">Transmembrane helix</keyword>
<reference key="1">
    <citation type="journal article" date="2007" name="PLoS ONE">
        <title>Paradoxical DNA repair and peroxide resistance gene conservation in Bacillus pumilus SAFR-032.</title>
        <authorList>
            <person name="Gioia J."/>
            <person name="Yerrapragada S."/>
            <person name="Qin X."/>
            <person name="Jiang H."/>
            <person name="Igboeli O.C."/>
            <person name="Muzny D."/>
            <person name="Dugan-Rocha S."/>
            <person name="Ding Y."/>
            <person name="Hawes A."/>
            <person name="Liu W."/>
            <person name="Perez L."/>
            <person name="Kovar C."/>
            <person name="Dinh H."/>
            <person name="Lee S."/>
            <person name="Nazareth L."/>
            <person name="Blyth P."/>
            <person name="Holder M."/>
            <person name="Buhay C."/>
            <person name="Tirumalai M.R."/>
            <person name="Liu Y."/>
            <person name="Dasgupta I."/>
            <person name="Bokhetache L."/>
            <person name="Fujita M."/>
            <person name="Karouia F."/>
            <person name="Eswara Moorthy P."/>
            <person name="Siefert J."/>
            <person name="Uzman A."/>
            <person name="Buzumbo P."/>
            <person name="Verma A."/>
            <person name="Zwiya H."/>
            <person name="McWilliams B.D."/>
            <person name="Olowu A."/>
            <person name="Clinkenbeard K.D."/>
            <person name="Newcombe D."/>
            <person name="Golebiewski L."/>
            <person name="Petrosino J.F."/>
            <person name="Nicholson W.L."/>
            <person name="Fox G.E."/>
            <person name="Venkateswaran K."/>
            <person name="Highlander S.K."/>
            <person name="Weinstock G.M."/>
        </authorList>
    </citation>
    <scope>NUCLEOTIDE SEQUENCE [LARGE SCALE GENOMIC DNA]</scope>
    <source>
        <strain>SAFR-032</strain>
    </source>
</reference>